<dbReference type="EMBL" id="AF113946">
    <property type="protein sequence ID" value="AAF18938.1"/>
    <property type="molecule type" value="mRNA"/>
</dbReference>
<dbReference type="RefSeq" id="NP_989655.1">
    <property type="nucleotide sequence ID" value="NM_204324.2"/>
</dbReference>
<dbReference type="RefSeq" id="XP_015151145.1">
    <property type="nucleotide sequence ID" value="XM_015295659.4"/>
</dbReference>
<dbReference type="RefSeq" id="XP_015151146.1">
    <property type="nucleotide sequence ID" value="XM_015295660.3"/>
</dbReference>
<dbReference type="RefSeq" id="XP_015151147.1">
    <property type="nucleotide sequence ID" value="XM_015295661.4"/>
</dbReference>
<dbReference type="RefSeq" id="XP_024997649.1">
    <property type="nucleotide sequence ID" value="XM_025141881.3"/>
</dbReference>
<dbReference type="RefSeq" id="XP_040505935.1">
    <property type="nucleotide sequence ID" value="XM_040650001.2"/>
</dbReference>
<dbReference type="RefSeq" id="XP_040505936.1">
    <property type="nucleotide sequence ID" value="XM_040650002.2"/>
</dbReference>
<dbReference type="RefSeq" id="XP_040505937.1">
    <property type="nucleotide sequence ID" value="XM_040650003.2"/>
</dbReference>
<dbReference type="RefSeq" id="XP_040505939.1">
    <property type="nucleotide sequence ID" value="XM_040650005.2"/>
</dbReference>
<dbReference type="RefSeq" id="XP_040505940.1">
    <property type="nucleotide sequence ID" value="XM_040650006.2"/>
</dbReference>
<dbReference type="RefSeq" id="XP_040505941.1">
    <property type="nucleotide sequence ID" value="XM_040650007.2"/>
</dbReference>
<dbReference type="RefSeq" id="XP_040505942.1">
    <property type="nucleotide sequence ID" value="XM_040650008.2"/>
</dbReference>
<dbReference type="RefSeq" id="XP_046758238.1">
    <property type="nucleotide sequence ID" value="XM_046902282.1"/>
</dbReference>
<dbReference type="RefSeq" id="XP_046758239.1">
    <property type="nucleotide sequence ID" value="XM_046902283.1"/>
</dbReference>
<dbReference type="RefSeq" id="XP_046758240.1">
    <property type="nucleotide sequence ID" value="XM_046902284.1"/>
</dbReference>
<dbReference type="RefSeq" id="XP_046758241.1">
    <property type="nucleotide sequence ID" value="XM_046902285.1"/>
</dbReference>
<dbReference type="RefSeq" id="XP_046758242.1">
    <property type="nucleotide sequence ID" value="XM_046902286.1"/>
</dbReference>
<dbReference type="RefSeq" id="XP_046785830.1">
    <property type="nucleotide sequence ID" value="XM_046929874.1"/>
</dbReference>
<dbReference type="RefSeq" id="XP_046785831.1">
    <property type="nucleotide sequence ID" value="XM_046929875.1"/>
</dbReference>
<dbReference type="RefSeq" id="XP_046785833.1">
    <property type="nucleotide sequence ID" value="XM_046929877.1"/>
</dbReference>
<dbReference type="RefSeq" id="XP_046785834.1">
    <property type="nucleotide sequence ID" value="XM_046929878.1"/>
</dbReference>
<dbReference type="RefSeq" id="XP_046785835.1">
    <property type="nucleotide sequence ID" value="XM_046929879.1"/>
</dbReference>
<dbReference type="RefSeq" id="XP_046785836.1">
    <property type="nucleotide sequence ID" value="XM_046929880.1"/>
</dbReference>
<dbReference type="RefSeq" id="XP_046785837.1">
    <property type="nucleotide sequence ID" value="XM_046929881.1"/>
</dbReference>
<dbReference type="RefSeq" id="XP_046785838.1">
    <property type="nucleotide sequence ID" value="XM_046929882.1"/>
</dbReference>
<dbReference type="RefSeq" id="XP_046785839.1">
    <property type="nucleotide sequence ID" value="XM_046929883.1"/>
</dbReference>
<dbReference type="RefSeq" id="XP_046785840.1">
    <property type="nucleotide sequence ID" value="XM_046929884.1"/>
</dbReference>
<dbReference type="RefSeq" id="XP_046785841.1">
    <property type="nucleotide sequence ID" value="XM_046929885.1"/>
</dbReference>
<dbReference type="RefSeq" id="XP_046785842.1">
    <property type="nucleotide sequence ID" value="XM_046929886.1"/>
</dbReference>
<dbReference type="RefSeq" id="XP_046785844.1">
    <property type="nucleotide sequence ID" value="XM_046929888.1"/>
</dbReference>
<dbReference type="RefSeq" id="XP_046785845.1">
    <property type="nucleotide sequence ID" value="XM_046929889.1"/>
</dbReference>
<dbReference type="RefSeq" id="XP_046785846.1">
    <property type="nucleotide sequence ID" value="XM_046929890.1"/>
</dbReference>
<dbReference type="RefSeq" id="XP_046785847.1">
    <property type="nucleotide sequence ID" value="XM_046929891.1"/>
</dbReference>
<dbReference type="SMR" id="Q9PTR5"/>
<dbReference type="FunCoup" id="Q9PTR5">
    <property type="interactions" value="3054"/>
</dbReference>
<dbReference type="STRING" id="9031.ENSGALP00000009354"/>
<dbReference type="PaxDb" id="9031-ENSGALP00000009354"/>
<dbReference type="Ensembl" id="ENSGALT00010071537.1">
    <property type="protein sequence ID" value="ENSGALP00010044227.1"/>
    <property type="gene ID" value="ENSGALG00010029593.1"/>
</dbReference>
<dbReference type="GeneID" id="374224"/>
<dbReference type="KEGG" id="gga:374224"/>
<dbReference type="CTD" id="5048"/>
<dbReference type="VEuPathDB" id="HostDB:geneid_374224"/>
<dbReference type="eggNOG" id="KOG0295">
    <property type="taxonomic scope" value="Eukaryota"/>
</dbReference>
<dbReference type="GeneTree" id="ENSGT00940000155039"/>
<dbReference type="HOGENOM" id="CLU_000288_57_15_1"/>
<dbReference type="InParanoid" id="Q9PTR5"/>
<dbReference type="OMA" id="WHVATKE"/>
<dbReference type="OrthoDB" id="674604at2759"/>
<dbReference type="PhylomeDB" id="Q9PTR5"/>
<dbReference type="TreeFam" id="TF105741"/>
<dbReference type="Reactome" id="R-GGA-141444">
    <property type="pathway name" value="Amplification of signal from unattached kinetochores via a MAD2 inhibitory signal"/>
</dbReference>
<dbReference type="Reactome" id="R-GGA-2467813">
    <property type="pathway name" value="Separation of Sister Chromatids"/>
</dbReference>
<dbReference type="Reactome" id="R-GGA-2500257">
    <property type="pathway name" value="Resolution of Sister Chromatid Cohesion"/>
</dbReference>
<dbReference type="Reactome" id="R-GGA-2565942">
    <property type="pathway name" value="Regulation of PLK1 Activity at G2/M Transition"/>
</dbReference>
<dbReference type="Reactome" id="R-GGA-380259">
    <property type="pathway name" value="Loss of Nlp from mitotic centrosomes"/>
</dbReference>
<dbReference type="Reactome" id="R-GGA-380270">
    <property type="pathway name" value="Recruitment of mitotic centrosome proteins and complexes"/>
</dbReference>
<dbReference type="Reactome" id="R-GGA-380284">
    <property type="pathway name" value="Loss of proteins required for interphase microtubule organization from the centrosome"/>
</dbReference>
<dbReference type="Reactome" id="R-GGA-380320">
    <property type="pathway name" value="Recruitment of NuMA to mitotic centrosomes"/>
</dbReference>
<dbReference type="Reactome" id="R-GGA-5620912">
    <property type="pathway name" value="Anchoring of the basal body to the plasma membrane"/>
</dbReference>
<dbReference type="Reactome" id="R-GGA-5663220">
    <property type="pathway name" value="RHO GTPases Activate Formins"/>
</dbReference>
<dbReference type="Reactome" id="R-GGA-6811436">
    <property type="pathway name" value="COPI-independent Golgi-to-ER retrograde traffic"/>
</dbReference>
<dbReference type="Reactome" id="R-GGA-8854518">
    <property type="pathway name" value="AURKA Activation by TPX2"/>
</dbReference>
<dbReference type="Reactome" id="R-GGA-9648025">
    <property type="pathway name" value="EML4 and NUDC in mitotic spindle formation"/>
</dbReference>
<dbReference type="PRO" id="PR:Q9PTR5"/>
<dbReference type="Proteomes" id="UP000000539">
    <property type="component" value="Chromosome 19"/>
</dbReference>
<dbReference type="Bgee" id="ENSGALG00000005834">
    <property type="expression patterns" value="Expressed in brain and 14 other cell types or tissues"/>
</dbReference>
<dbReference type="GO" id="GO:0008247">
    <property type="term" value="C:1-alkyl-2-acetylglycerophosphocholine esterase complex"/>
    <property type="evidence" value="ECO:0000250"/>
    <property type="project" value="UniProtKB"/>
</dbReference>
<dbReference type="GO" id="GO:0000235">
    <property type="term" value="C:astral microtubule"/>
    <property type="evidence" value="ECO:0007669"/>
    <property type="project" value="Ensembl"/>
</dbReference>
<dbReference type="GO" id="GO:1904115">
    <property type="term" value="C:axon cytoplasm"/>
    <property type="evidence" value="ECO:0007669"/>
    <property type="project" value="GOC"/>
</dbReference>
<dbReference type="GO" id="GO:0005938">
    <property type="term" value="C:cell cortex"/>
    <property type="evidence" value="ECO:0007669"/>
    <property type="project" value="Ensembl"/>
</dbReference>
<dbReference type="GO" id="GO:0031252">
    <property type="term" value="C:cell leading edge"/>
    <property type="evidence" value="ECO:0007669"/>
    <property type="project" value="Ensembl"/>
</dbReference>
<dbReference type="GO" id="GO:0005813">
    <property type="term" value="C:centrosome"/>
    <property type="evidence" value="ECO:0007669"/>
    <property type="project" value="UniProtKB-SubCell"/>
</dbReference>
<dbReference type="GO" id="GO:0005881">
    <property type="term" value="C:cytoplasmic microtubule"/>
    <property type="evidence" value="ECO:0000318"/>
    <property type="project" value="GO_Central"/>
</dbReference>
<dbReference type="GO" id="GO:0098978">
    <property type="term" value="C:glutamatergic synapse"/>
    <property type="evidence" value="ECO:0007669"/>
    <property type="project" value="Ensembl"/>
</dbReference>
<dbReference type="GO" id="GO:0000776">
    <property type="term" value="C:kinetochore"/>
    <property type="evidence" value="ECO:0000318"/>
    <property type="project" value="GO_Central"/>
</dbReference>
<dbReference type="GO" id="GO:0005875">
    <property type="term" value="C:microtubule associated complex"/>
    <property type="evidence" value="ECO:0000318"/>
    <property type="project" value="GO_Central"/>
</dbReference>
<dbReference type="GO" id="GO:0031514">
    <property type="term" value="C:motile cilium"/>
    <property type="evidence" value="ECO:0007669"/>
    <property type="project" value="Ensembl"/>
</dbReference>
<dbReference type="GO" id="GO:0043005">
    <property type="term" value="C:neuron projection"/>
    <property type="evidence" value="ECO:0000318"/>
    <property type="project" value="GO_Central"/>
</dbReference>
<dbReference type="GO" id="GO:0043025">
    <property type="term" value="C:neuronal cell body"/>
    <property type="evidence" value="ECO:0000318"/>
    <property type="project" value="GO_Central"/>
</dbReference>
<dbReference type="GO" id="GO:0005635">
    <property type="term" value="C:nuclear envelope"/>
    <property type="evidence" value="ECO:0000318"/>
    <property type="project" value="GO_Central"/>
</dbReference>
<dbReference type="GO" id="GO:0048471">
    <property type="term" value="C:perinuclear region of cytoplasm"/>
    <property type="evidence" value="ECO:0007669"/>
    <property type="project" value="Ensembl"/>
</dbReference>
<dbReference type="GO" id="GO:0098685">
    <property type="term" value="C:Schaffer collateral - CA1 synapse"/>
    <property type="evidence" value="ECO:0007669"/>
    <property type="project" value="Ensembl"/>
</dbReference>
<dbReference type="GO" id="GO:0032420">
    <property type="term" value="C:stereocilium"/>
    <property type="evidence" value="ECO:0007669"/>
    <property type="project" value="Ensembl"/>
</dbReference>
<dbReference type="GO" id="GO:0070840">
    <property type="term" value="F:dynein complex binding"/>
    <property type="evidence" value="ECO:0000318"/>
    <property type="project" value="GO_Central"/>
</dbReference>
<dbReference type="GO" id="GO:0042802">
    <property type="term" value="F:identical protein binding"/>
    <property type="evidence" value="ECO:0007669"/>
    <property type="project" value="Ensembl"/>
</dbReference>
<dbReference type="GO" id="GO:0051010">
    <property type="term" value="F:microtubule plus-end binding"/>
    <property type="evidence" value="ECO:0000318"/>
    <property type="project" value="GO_Central"/>
</dbReference>
<dbReference type="GO" id="GO:0051219">
    <property type="term" value="F:phosphoprotein binding"/>
    <property type="evidence" value="ECO:0007669"/>
    <property type="project" value="Ensembl"/>
</dbReference>
<dbReference type="GO" id="GO:0046982">
    <property type="term" value="F:protein heterodimerization activity"/>
    <property type="evidence" value="ECO:0000250"/>
    <property type="project" value="UniProtKB"/>
</dbReference>
<dbReference type="GO" id="GO:0001675">
    <property type="term" value="P:acrosome assembly"/>
    <property type="evidence" value="ECO:0007669"/>
    <property type="project" value="Ensembl"/>
</dbReference>
<dbReference type="GO" id="GO:0030036">
    <property type="term" value="P:actin cytoskeleton organization"/>
    <property type="evidence" value="ECO:0007669"/>
    <property type="project" value="Ensembl"/>
</dbReference>
<dbReference type="GO" id="GO:0008344">
    <property type="term" value="P:adult locomotory behavior"/>
    <property type="evidence" value="ECO:0007669"/>
    <property type="project" value="Ensembl"/>
</dbReference>
<dbReference type="GO" id="GO:0001667">
    <property type="term" value="P:ameboidal-type cell migration"/>
    <property type="evidence" value="ECO:0007669"/>
    <property type="project" value="Ensembl"/>
</dbReference>
<dbReference type="GO" id="GO:0060117">
    <property type="term" value="P:auditory receptor cell development"/>
    <property type="evidence" value="ECO:0007669"/>
    <property type="project" value="Ensembl"/>
</dbReference>
<dbReference type="GO" id="GO:0048854">
    <property type="term" value="P:brain morphogenesis"/>
    <property type="evidence" value="ECO:0000318"/>
    <property type="project" value="GO_Central"/>
</dbReference>
<dbReference type="GO" id="GO:0051301">
    <property type="term" value="P:cell division"/>
    <property type="evidence" value="ECO:0007669"/>
    <property type="project" value="UniProtKB-KW"/>
</dbReference>
<dbReference type="GO" id="GO:0007268">
    <property type="term" value="P:chemical synaptic transmission"/>
    <property type="evidence" value="ECO:0007669"/>
    <property type="project" value="Ensembl"/>
</dbReference>
<dbReference type="GO" id="GO:0090102">
    <property type="term" value="P:cochlea development"/>
    <property type="evidence" value="ECO:0007669"/>
    <property type="project" value="Ensembl"/>
</dbReference>
<dbReference type="GO" id="GO:0043622">
    <property type="term" value="P:cortical microtubule organization"/>
    <property type="evidence" value="ECO:0007669"/>
    <property type="project" value="Ensembl"/>
</dbReference>
<dbReference type="GO" id="GO:0000132">
    <property type="term" value="P:establishment of mitotic spindle orientation"/>
    <property type="evidence" value="ECO:0000318"/>
    <property type="project" value="GO_Central"/>
</dbReference>
<dbReference type="GO" id="GO:0042249">
    <property type="term" value="P:establishment of planar polarity of embryonic epithelium"/>
    <property type="evidence" value="ECO:0007669"/>
    <property type="project" value="Ensembl"/>
</dbReference>
<dbReference type="GO" id="GO:0007281">
    <property type="term" value="P:germ cell development"/>
    <property type="evidence" value="ECO:0000318"/>
    <property type="project" value="GO_Central"/>
</dbReference>
<dbReference type="GO" id="GO:1904936">
    <property type="term" value="P:interneuron migration"/>
    <property type="evidence" value="ECO:0007669"/>
    <property type="project" value="Ensembl"/>
</dbReference>
<dbReference type="GO" id="GO:0007254">
    <property type="term" value="P:JNK cascade"/>
    <property type="evidence" value="ECO:0007669"/>
    <property type="project" value="Ensembl"/>
</dbReference>
<dbReference type="GO" id="GO:0021819">
    <property type="term" value="P:layer formation in cerebral cortex"/>
    <property type="evidence" value="ECO:0007669"/>
    <property type="project" value="Ensembl"/>
</dbReference>
<dbReference type="GO" id="GO:0007611">
    <property type="term" value="P:learning or memory"/>
    <property type="evidence" value="ECO:0007669"/>
    <property type="project" value="Ensembl"/>
</dbReference>
<dbReference type="GO" id="GO:0051661">
    <property type="term" value="P:maintenance of centrosome location"/>
    <property type="evidence" value="ECO:0007669"/>
    <property type="project" value="Ensembl"/>
</dbReference>
<dbReference type="GO" id="GO:0090176">
    <property type="term" value="P:microtubule cytoskeleton organization involved in establishment of planar polarity"/>
    <property type="evidence" value="ECO:0007669"/>
    <property type="project" value="Ensembl"/>
</dbReference>
<dbReference type="GO" id="GO:0031023">
    <property type="term" value="P:microtubule organizing center organization"/>
    <property type="evidence" value="ECO:0000318"/>
    <property type="project" value="GO_Central"/>
</dbReference>
<dbReference type="GO" id="GO:0051012">
    <property type="term" value="P:microtubule sliding"/>
    <property type="evidence" value="ECO:0007669"/>
    <property type="project" value="UniProtKB-UniRule"/>
</dbReference>
<dbReference type="GO" id="GO:0050804">
    <property type="term" value="P:modulation of chemical synaptic transmission"/>
    <property type="evidence" value="ECO:0007669"/>
    <property type="project" value="Ensembl"/>
</dbReference>
<dbReference type="GO" id="GO:0097529">
    <property type="term" value="P:myeloid leukocyte migration"/>
    <property type="evidence" value="ECO:0007669"/>
    <property type="project" value="Ensembl"/>
</dbReference>
<dbReference type="GO" id="GO:0046329">
    <property type="term" value="P:negative regulation of JNK cascade"/>
    <property type="evidence" value="ECO:0007669"/>
    <property type="project" value="Ensembl"/>
</dbReference>
<dbReference type="GO" id="GO:0007405">
    <property type="term" value="P:neuroblast proliferation"/>
    <property type="evidence" value="ECO:0007669"/>
    <property type="project" value="Ensembl"/>
</dbReference>
<dbReference type="GO" id="GO:0050885">
    <property type="term" value="P:neuromuscular process controlling balance"/>
    <property type="evidence" value="ECO:0007669"/>
    <property type="project" value="Ensembl"/>
</dbReference>
<dbReference type="GO" id="GO:0051081">
    <property type="term" value="P:nuclear membrane disassembly"/>
    <property type="evidence" value="ECO:0007669"/>
    <property type="project" value="Ensembl"/>
</dbReference>
<dbReference type="GO" id="GO:0007097">
    <property type="term" value="P:nuclear migration"/>
    <property type="evidence" value="ECO:0000318"/>
    <property type="project" value="GO_Central"/>
</dbReference>
<dbReference type="GO" id="GO:0036035">
    <property type="term" value="P:osteoclast development"/>
    <property type="evidence" value="ECO:0007669"/>
    <property type="project" value="Ensembl"/>
</dbReference>
<dbReference type="GO" id="GO:0001961">
    <property type="term" value="P:positive regulation of cytokine-mediated signaling pathway"/>
    <property type="evidence" value="ECO:0007669"/>
    <property type="project" value="Ensembl"/>
</dbReference>
<dbReference type="GO" id="GO:0061003">
    <property type="term" value="P:positive regulation of dendritic spine morphogenesis"/>
    <property type="evidence" value="ECO:0007669"/>
    <property type="project" value="Ensembl"/>
</dbReference>
<dbReference type="GO" id="GO:0040019">
    <property type="term" value="P:positive regulation of embryonic development"/>
    <property type="evidence" value="ECO:0007669"/>
    <property type="project" value="Ensembl"/>
</dbReference>
<dbReference type="GO" id="GO:0009306">
    <property type="term" value="P:protein secretion"/>
    <property type="evidence" value="ECO:0007669"/>
    <property type="project" value="Ensembl"/>
</dbReference>
<dbReference type="GO" id="GO:0140650">
    <property type="term" value="P:radial glia-guided pyramidal neuron migration"/>
    <property type="evidence" value="ECO:0007669"/>
    <property type="project" value="Ensembl"/>
</dbReference>
<dbReference type="GO" id="GO:0038026">
    <property type="term" value="P:reelin-mediated signaling pathway"/>
    <property type="evidence" value="ECO:0000250"/>
    <property type="project" value="UniProtKB"/>
</dbReference>
<dbReference type="GO" id="GO:0070507">
    <property type="term" value="P:regulation of microtubule cytoskeleton organization"/>
    <property type="evidence" value="ECO:0007669"/>
    <property type="project" value="Ensembl"/>
</dbReference>
<dbReference type="GO" id="GO:0008090">
    <property type="term" value="P:retrograde axonal transport"/>
    <property type="evidence" value="ECO:0000318"/>
    <property type="project" value="GO_Central"/>
</dbReference>
<dbReference type="GO" id="GO:0019226">
    <property type="term" value="P:transmission of nerve impulse"/>
    <property type="evidence" value="ECO:0007669"/>
    <property type="project" value="Ensembl"/>
</dbReference>
<dbReference type="GO" id="GO:0047496">
    <property type="term" value="P:vesicle transport along microtubule"/>
    <property type="evidence" value="ECO:0000318"/>
    <property type="project" value="GO_Central"/>
</dbReference>
<dbReference type="CDD" id="cd00200">
    <property type="entry name" value="WD40"/>
    <property type="match status" value="1"/>
</dbReference>
<dbReference type="FunFam" id="2.130.10.10:FF:000038">
    <property type="entry name" value="Lissencephaly-1 homolog B"/>
    <property type="match status" value="1"/>
</dbReference>
<dbReference type="FunFam" id="1.20.960.30:FF:000002">
    <property type="entry name" value="Platelet-activating factor acetylhydrolase ib"/>
    <property type="match status" value="1"/>
</dbReference>
<dbReference type="Gene3D" id="1.20.960.30">
    <property type="match status" value="1"/>
</dbReference>
<dbReference type="Gene3D" id="2.130.10.10">
    <property type="entry name" value="YVTN repeat-like/Quinoprotein amine dehydrogenase"/>
    <property type="match status" value="1"/>
</dbReference>
<dbReference type="HAMAP" id="MF_03141">
    <property type="entry name" value="lis1"/>
    <property type="match status" value="1"/>
</dbReference>
<dbReference type="InterPro" id="IPR050844">
    <property type="entry name" value="Coatomer_complex_subunit"/>
</dbReference>
<dbReference type="InterPro" id="IPR017252">
    <property type="entry name" value="Dynein_regulator_LIS1"/>
</dbReference>
<dbReference type="InterPro" id="IPR020472">
    <property type="entry name" value="G-protein_beta_WD-40_rep"/>
</dbReference>
<dbReference type="InterPro" id="IPR037190">
    <property type="entry name" value="LIS1_N"/>
</dbReference>
<dbReference type="InterPro" id="IPR006594">
    <property type="entry name" value="LisH"/>
</dbReference>
<dbReference type="InterPro" id="IPR056795">
    <property type="entry name" value="PAC1-like_LisH-like_dom"/>
</dbReference>
<dbReference type="InterPro" id="IPR015943">
    <property type="entry name" value="WD40/YVTN_repeat-like_dom_sf"/>
</dbReference>
<dbReference type="InterPro" id="IPR019775">
    <property type="entry name" value="WD40_repeat_CS"/>
</dbReference>
<dbReference type="InterPro" id="IPR036322">
    <property type="entry name" value="WD40_repeat_dom_sf"/>
</dbReference>
<dbReference type="InterPro" id="IPR001680">
    <property type="entry name" value="WD40_rpt"/>
</dbReference>
<dbReference type="PANTHER" id="PTHR19876">
    <property type="entry name" value="COATOMER"/>
    <property type="match status" value="1"/>
</dbReference>
<dbReference type="Pfam" id="PF24951">
    <property type="entry name" value="LisH_PAC1"/>
    <property type="match status" value="1"/>
</dbReference>
<dbReference type="Pfam" id="PF00400">
    <property type="entry name" value="WD40"/>
    <property type="match status" value="7"/>
</dbReference>
<dbReference type="PIRSF" id="PIRSF037647">
    <property type="entry name" value="Dynein_regulator_Lis1"/>
    <property type="match status" value="1"/>
</dbReference>
<dbReference type="PRINTS" id="PR00320">
    <property type="entry name" value="GPROTEINBRPT"/>
</dbReference>
<dbReference type="SMART" id="SM00667">
    <property type="entry name" value="LisH"/>
    <property type="match status" value="1"/>
</dbReference>
<dbReference type="SMART" id="SM00320">
    <property type="entry name" value="WD40"/>
    <property type="match status" value="7"/>
</dbReference>
<dbReference type="SUPFAM" id="SSF109925">
    <property type="entry name" value="Lissencephaly-1 protein (Lis-1, PAF-AH alpha) N-terminal domain"/>
    <property type="match status" value="1"/>
</dbReference>
<dbReference type="SUPFAM" id="SSF50978">
    <property type="entry name" value="WD40 repeat-like"/>
    <property type="match status" value="1"/>
</dbReference>
<dbReference type="PROSITE" id="PS50896">
    <property type="entry name" value="LISH"/>
    <property type="match status" value="1"/>
</dbReference>
<dbReference type="PROSITE" id="PS00678">
    <property type="entry name" value="WD_REPEATS_1"/>
    <property type="match status" value="5"/>
</dbReference>
<dbReference type="PROSITE" id="PS50082">
    <property type="entry name" value="WD_REPEATS_2"/>
    <property type="match status" value="7"/>
</dbReference>
<dbReference type="PROSITE" id="PS50294">
    <property type="entry name" value="WD_REPEATS_REGION"/>
    <property type="match status" value="1"/>
</dbReference>
<evidence type="ECO:0000250" key="1">
    <source>
        <dbReference type="UniProtKB" id="P43033"/>
    </source>
</evidence>
<evidence type="ECO:0000255" key="2">
    <source>
        <dbReference type="HAMAP-Rule" id="MF_03141"/>
    </source>
</evidence>
<evidence type="ECO:0000269" key="3">
    <source>
    </source>
</evidence>
<name>LIS1_CHICK</name>
<keyword id="KW-0131">Cell cycle</keyword>
<keyword id="KW-0132">Cell division</keyword>
<keyword id="KW-0175">Coiled coil</keyword>
<keyword id="KW-0963">Cytoplasm</keyword>
<keyword id="KW-0206">Cytoskeleton</keyword>
<keyword id="KW-0217">Developmental protein</keyword>
<keyword id="KW-0221">Differentiation</keyword>
<keyword id="KW-0493">Microtubule</keyword>
<keyword id="KW-0498">Mitosis</keyword>
<keyword id="KW-0524">Neurogenesis</keyword>
<keyword id="KW-1185">Reference proteome</keyword>
<keyword id="KW-0677">Repeat</keyword>
<keyword id="KW-0813">Transport</keyword>
<keyword id="KW-0853">WD repeat</keyword>
<proteinExistence type="evidence at transcript level"/>
<organism>
    <name type="scientific">Gallus gallus</name>
    <name type="common">Chicken</name>
    <dbReference type="NCBI Taxonomy" id="9031"/>
    <lineage>
        <taxon>Eukaryota</taxon>
        <taxon>Metazoa</taxon>
        <taxon>Chordata</taxon>
        <taxon>Craniata</taxon>
        <taxon>Vertebrata</taxon>
        <taxon>Euteleostomi</taxon>
        <taxon>Archelosauria</taxon>
        <taxon>Archosauria</taxon>
        <taxon>Dinosauria</taxon>
        <taxon>Saurischia</taxon>
        <taxon>Theropoda</taxon>
        <taxon>Coelurosauria</taxon>
        <taxon>Aves</taxon>
        <taxon>Neognathae</taxon>
        <taxon>Galloanserae</taxon>
        <taxon>Galliformes</taxon>
        <taxon>Phasianidae</taxon>
        <taxon>Phasianinae</taxon>
        <taxon>Gallus</taxon>
    </lineage>
</organism>
<gene>
    <name evidence="2" type="primary">PAFAH1B1</name>
    <name evidence="2" type="synonym">LIS1</name>
</gene>
<protein>
    <recommendedName>
        <fullName evidence="2">Lissencephaly-1 homolog</fullName>
    </recommendedName>
</protein>
<comment type="function">
    <text evidence="1 2">Regulatory subunit (beta subunit) of the cytosolic type I platelet-activating factor (PAF) acetylhydrolase (PAF-AH (I)), an enzyme that catalyzes the hydrolyze of the acetyl group at the sn-2 position of PAF and its analogs and participates in PAF inactivation. Regulates the PAF-AH (I) activity in a catalytic dimer composition-dependent manner (By similarity). Positively regulates the activity of the minus-end directed microtubule motor protein dynein. May enhance dynein-mediated microtubule sliding by targeting dynein to the microtubule plus end. Required for several dynein- and microtubule-dependent processes such as the maintenance of Golgi integrity, the peripheral transport of microtubule fragments and the coupling of the nucleus and centrosome. May be required for proliferation of neuronal precursors and neuronal migration.</text>
</comment>
<comment type="subunit">
    <text evidence="1 2">Can self-associate. Component of the cytosolic PAF-AH (I) heterotetrameric enzyme, which is composed of PAFAH1B1 (beta), PAFAH1B2 (alpha2) and PAFAH1B3 (alpha1) subunits. The catalytic activity of the enzyme resides in the alpha1 (PAFAH1B3) and alpha2 (PAFAH1B2) subunits, whereas the beta subunit (PAFAH1B1) has regulatory activity. Trimer formation is not essential for the catalytic activity (By similarity). Interacts with dynein, dynactin, NDE1 and NDEL1.</text>
</comment>
<comment type="subcellular location">
    <subcellularLocation>
        <location evidence="2">Cytoplasm</location>
        <location evidence="2">Cytoskeleton</location>
    </subcellularLocation>
    <subcellularLocation>
        <location evidence="2">Cytoplasm</location>
        <location evidence="2">Cytoskeleton</location>
        <location evidence="2">Microtubule organizing center</location>
        <location evidence="2">Centrosome</location>
    </subcellularLocation>
    <text evidence="2">Localizes to the plus end of microtubules and to the centrosome.</text>
</comment>
<comment type="developmental stage">
    <text evidence="3">Expressed in the intermediate and lateral mesoderm, posterior neural tube, notochord and somites of stage 9 embryos. Expressed in the neural tube, roof plate, notochord, somites, dermomymotomes and eye of stage 20 embryos. This expression pattern persists in stage 27 embryos, where expression is also seen in the heart, intestine and dorsal aorta. Weakly and uniformly expressed in the stage 35 embryo.</text>
</comment>
<comment type="domain">
    <text evidence="2">Dimerization mediated by the LisH domain may be required to activate dynein.</text>
</comment>
<comment type="similarity">
    <text evidence="2">Belongs to the WD repeat LIS1/nudF family.</text>
</comment>
<accession>Q9PTR5</accession>
<reference key="1">
    <citation type="journal article" date="2000" name="Dev. Genes Evol.">
        <title>Expression of chLIS1, a chicken homolog of LIS1.</title>
        <authorList>
            <person name="Shmueli O."/>
            <person name="Reiner O."/>
        </authorList>
    </citation>
    <scope>NUCLEOTIDE SEQUENCE [MRNA]</scope>
    <scope>DEVELOPMENTAL STAGE</scope>
</reference>
<sequence>MVLSQRQRDELNRAIADYLRSNGYEEAYSVFKKEAELDVNEELDKKYAGLLEKKWTSVIRLQKKVMELESKLNEAKEEFTSGGPLGQKRDPKEWIPRPPEKYALSGHRSPVTRVIFHPVFSVMVSASEDATIKVWDYETGDFERTLKGHTDSVQDISFDHTGKLLASCSADMTIKLWDFQGFECIRTMHGHDHNVSSVAIMPNGDHIVSASRDKTIKMWEVQTGYCVKTFTGHREWVRMVRPNQDGTLIASCSNDQTVRVWVVATKECKAELREHEHVVECISWAPESSYSTISEATGSETKKSGKPGPFLLSGSRDKTIKMWDISTGMCLMTLVGHDNWVRGVLFHSGGKFILSCADDKTLRVWDFKNKRCMKTLNAHEHFVTSLDFHKTAPYVVTGSVDQTVKVWECR</sequence>
<feature type="initiator methionine" description="Removed" evidence="2">
    <location>
        <position position="1"/>
    </location>
</feature>
<feature type="chain" id="PRO_0000240415" description="Lissencephaly-1 homolog">
    <location>
        <begin position="2"/>
        <end position="410"/>
    </location>
</feature>
<feature type="domain" description="LisH" evidence="2">
    <location>
        <begin position="7"/>
        <end position="39"/>
    </location>
</feature>
<feature type="repeat" description="WD 1">
    <location>
        <begin position="106"/>
        <end position="147"/>
    </location>
</feature>
<feature type="repeat" description="WD 2">
    <location>
        <begin position="148"/>
        <end position="187"/>
    </location>
</feature>
<feature type="repeat" description="WD 3">
    <location>
        <begin position="190"/>
        <end position="229"/>
    </location>
</feature>
<feature type="repeat" description="WD 4">
    <location>
        <begin position="232"/>
        <end position="271"/>
    </location>
</feature>
<feature type="repeat" description="WD 5">
    <location>
        <begin position="274"/>
        <end position="333"/>
    </location>
</feature>
<feature type="repeat" description="WD 6">
    <location>
        <begin position="336"/>
        <end position="377"/>
    </location>
</feature>
<feature type="repeat" description="WD 7">
    <location>
        <begin position="378"/>
        <end position="410"/>
    </location>
</feature>
<feature type="coiled-coil region" evidence="2">
    <location>
        <begin position="56"/>
        <end position="82"/>
    </location>
</feature>